<accession>B4TD24</accession>
<organism>
    <name type="scientific">Salmonella heidelberg (strain SL476)</name>
    <dbReference type="NCBI Taxonomy" id="454169"/>
    <lineage>
        <taxon>Bacteria</taxon>
        <taxon>Pseudomonadati</taxon>
        <taxon>Pseudomonadota</taxon>
        <taxon>Gammaproteobacteria</taxon>
        <taxon>Enterobacterales</taxon>
        <taxon>Enterobacteriaceae</taxon>
        <taxon>Salmonella</taxon>
    </lineage>
</organism>
<comment type="function">
    <text evidence="1">Catalyzes the attachment of serine to tRNA(Ser). Is also able to aminoacylate tRNA(Sec) with serine, to form the misacylated tRNA L-seryl-tRNA(Sec), which will be further converted into selenocysteinyl-tRNA(Sec).</text>
</comment>
<comment type="catalytic activity">
    <reaction evidence="1">
        <text>tRNA(Ser) + L-serine + ATP = L-seryl-tRNA(Ser) + AMP + diphosphate + H(+)</text>
        <dbReference type="Rhea" id="RHEA:12292"/>
        <dbReference type="Rhea" id="RHEA-COMP:9669"/>
        <dbReference type="Rhea" id="RHEA-COMP:9703"/>
        <dbReference type="ChEBI" id="CHEBI:15378"/>
        <dbReference type="ChEBI" id="CHEBI:30616"/>
        <dbReference type="ChEBI" id="CHEBI:33019"/>
        <dbReference type="ChEBI" id="CHEBI:33384"/>
        <dbReference type="ChEBI" id="CHEBI:78442"/>
        <dbReference type="ChEBI" id="CHEBI:78533"/>
        <dbReference type="ChEBI" id="CHEBI:456215"/>
        <dbReference type="EC" id="6.1.1.11"/>
    </reaction>
</comment>
<comment type="catalytic activity">
    <reaction evidence="1">
        <text>tRNA(Sec) + L-serine + ATP = L-seryl-tRNA(Sec) + AMP + diphosphate + H(+)</text>
        <dbReference type="Rhea" id="RHEA:42580"/>
        <dbReference type="Rhea" id="RHEA-COMP:9742"/>
        <dbReference type="Rhea" id="RHEA-COMP:10128"/>
        <dbReference type="ChEBI" id="CHEBI:15378"/>
        <dbReference type="ChEBI" id="CHEBI:30616"/>
        <dbReference type="ChEBI" id="CHEBI:33019"/>
        <dbReference type="ChEBI" id="CHEBI:33384"/>
        <dbReference type="ChEBI" id="CHEBI:78442"/>
        <dbReference type="ChEBI" id="CHEBI:78533"/>
        <dbReference type="ChEBI" id="CHEBI:456215"/>
        <dbReference type="EC" id="6.1.1.11"/>
    </reaction>
</comment>
<comment type="pathway">
    <text evidence="1">Aminoacyl-tRNA biosynthesis; selenocysteinyl-tRNA(Sec) biosynthesis; L-seryl-tRNA(Sec) from L-serine and tRNA(Sec): step 1/1.</text>
</comment>
<comment type="subunit">
    <text evidence="1">Homodimer. The tRNA molecule binds across the dimer.</text>
</comment>
<comment type="subcellular location">
    <subcellularLocation>
        <location evidence="1">Cytoplasm</location>
    </subcellularLocation>
</comment>
<comment type="domain">
    <text evidence="1">Consists of two distinct domains, a catalytic core and a N-terminal extension that is involved in tRNA binding.</text>
</comment>
<comment type="similarity">
    <text evidence="1">Belongs to the class-II aminoacyl-tRNA synthetase family. Type-1 seryl-tRNA synthetase subfamily.</text>
</comment>
<sequence>MLDPNLLRNEPDAVAEKLARRGFKLDVDKLRALEERRKVLQVNTENLQAERNSRSKSIGQAKARGEDIEPLRLEVNKLGEELDAAKAELETLLAEIRDIALTIPNLPADEVPVGKDENDNVEVSRWGTPREFDFEIRDHVTLGEMHSGLDFAAAVKLTGSRFVVMKGQIARMHRALSQFMLDLHTEQHGYSENYVPYLVNHDTLYGTGQLPKFAGDLFHTRPLEEEADSSNYALIPTAEVPLTNLVRDEIIDEDQLPIKMTAHTPCFRSEAGSYGRDTRGLIRMHQFDKVEMVQIVRPEDSMAALEEMTGHAEKVLQLLGLPYRKIILCTGDMGFGACKTYDLEVWVPAQNTYREISSCSNVWDFQARRMQARCRSKSDKKTRLVHTLNGSGLAVGRTLVAVMENYQQADGRIEVPEVLRPYMNGLEYIG</sequence>
<evidence type="ECO:0000255" key="1">
    <source>
        <dbReference type="HAMAP-Rule" id="MF_00176"/>
    </source>
</evidence>
<feature type="chain" id="PRO_1000098120" description="Serine--tRNA ligase">
    <location>
        <begin position="1"/>
        <end position="430"/>
    </location>
</feature>
<feature type="binding site" evidence="1">
    <location>
        <begin position="237"/>
        <end position="239"/>
    </location>
    <ligand>
        <name>L-serine</name>
        <dbReference type="ChEBI" id="CHEBI:33384"/>
    </ligand>
</feature>
<feature type="binding site" evidence="1">
    <location>
        <begin position="268"/>
        <end position="270"/>
    </location>
    <ligand>
        <name>ATP</name>
        <dbReference type="ChEBI" id="CHEBI:30616"/>
    </ligand>
</feature>
<feature type="binding site" evidence="1">
    <location>
        <position position="291"/>
    </location>
    <ligand>
        <name>L-serine</name>
        <dbReference type="ChEBI" id="CHEBI:33384"/>
    </ligand>
</feature>
<feature type="binding site" evidence="1">
    <location>
        <begin position="355"/>
        <end position="358"/>
    </location>
    <ligand>
        <name>ATP</name>
        <dbReference type="ChEBI" id="CHEBI:30616"/>
    </ligand>
</feature>
<feature type="binding site" evidence="1">
    <location>
        <position position="391"/>
    </location>
    <ligand>
        <name>L-serine</name>
        <dbReference type="ChEBI" id="CHEBI:33384"/>
    </ligand>
</feature>
<gene>
    <name evidence="1" type="primary">serS</name>
    <name type="ordered locus">SeHA_C1062</name>
</gene>
<keyword id="KW-0030">Aminoacyl-tRNA synthetase</keyword>
<keyword id="KW-0067">ATP-binding</keyword>
<keyword id="KW-0963">Cytoplasm</keyword>
<keyword id="KW-0436">Ligase</keyword>
<keyword id="KW-0547">Nucleotide-binding</keyword>
<keyword id="KW-0648">Protein biosynthesis</keyword>
<name>SYS_SALHS</name>
<proteinExistence type="inferred from homology"/>
<reference key="1">
    <citation type="journal article" date="2011" name="J. Bacteriol.">
        <title>Comparative genomics of 28 Salmonella enterica isolates: evidence for CRISPR-mediated adaptive sublineage evolution.</title>
        <authorList>
            <person name="Fricke W.F."/>
            <person name="Mammel M.K."/>
            <person name="McDermott P.F."/>
            <person name="Tartera C."/>
            <person name="White D.G."/>
            <person name="Leclerc J.E."/>
            <person name="Ravel J."/>
            <person name="Cebula T.A."/>
        </authorList>
    </citation>
    <scope>NUCLEOTIDE SEQUENCE [LARGE SCALE GENOMIC DNA]</scope>
    <source>
        <strain>SL476</strain>
    </source>
</reference>
<protein>
    <recommendedName>
        <fullName evidence="1">Serine--tRNA ligase</fullName>
        <ecNumber evidence="1">6.1.1.11</ecNumber>
    </recommendedName>
    <alternativeName>
        <fullName evidence="1">Seryl-tRNA synthetase</fullName>
        <shortName evidence="1">SerRS</shortName>
    </alternativeName>
    <alternativeName>
        <fullName evidence="1">Seryl-tRNA(Ser/Sec) synthetase</fullName>
    </alternativeName>
</protein>
<dbReference type="EC" id="6.1.1.11" evidence="1"/>
<dbReference type="EMBL" id="CP001120">
    <property type="protein sequence ID" value="ACF69558.1"/>
    <property type="molecule type" value="Genomic_DNA"/>
</dbReference>
<dbReference type="RefSeq" id="WP_000886700.1">
    <property type="nucleotide sequence ID" value="NC_011083.1"/>
</dbReference>
<dbReference type="SMR" id="B4TD24"/>
<dbReference type="KEGG" id="seh:SeHA_C1062"/>
<dbReference type="HOGENOM" id="CLU_023797_1_1_6"/>
<dbReference type="UniPathway" id="UPA00906">
    <property type="reaction ID" value="UER00895"/>
</dbReference>
<dbReference type="Proteomes" id="UP000001866">
    <property type="component" value="Chromosome"/>
</dbReference>
<dbReference type="GO" id="GO:0005737">
    <property type="term" value="C:cytoplasm"/>
    <property type="evidence" value="ECO:0007669"/>
    <property type="project" value="UniProtKB-SubCell"/>
</dbReference>
<dbReference type="GO" id="GO:0005524">
    <property type="term" value="F:ATP binding"/>
    <property type="evidence" value="ECO:0007669"/>
    <property type="project" value="UniProtKB-UniRule"/>
</dbReference>
<dbReference type="GO" id="GO:0004828">
    <property type="term" value="F:serine-tRNA ligase activity"/>
    <property type="evidence" value="ECO:0007669"/>
    <property type="project" value="UniProtKB-UniRule"/>
</dbReference>
<dbReference type="GO" id="GO:0016260">
    <property type="term" value="P:selenocysteine biosynthetic process"/>
    <property type="evidence" value="ECO:0007669"/>
    <property type="project" value="UniProtKB-UniRule"/>
</dbReference>
<dbReference type="GO" id="GO:0006434">
    <property type="term" value="P:seryl-tRNA aminoacylation"/>
    <property type="evidence" value="ECO:0007669"/>
    <property type="project" value="UniProtKB-UniRule"/>
</dbReference>
<dbReference type="CDD" id="cd00770">
    <property type="entry name" value="SerRS_core"/>
    <property type="match status" value="1"/>
</dbReference>
<dbReference type="FunFam" id="1.10.287.40:FF:000001">
    <property type="entry name" value="Serine--tRNA ligase"/>
    <property type="match status" value="1"/>
</dbReference>
<dbReference type="FunFam" id="3.30.930.10:FF:000018">
    <property type="entry name" value="Serine--tRNA ligase"/>
    <property type="match status" value="1"/>
</dbReference>
<dbReference type="Gene3D" id="3.30.930.10">
    <property type="entry name" value="Bira Bifunctional Protein, Domain 2"/>
    <property type="match status" value="1"/>
</dbReference>
<dbReference type="Gene3D" id="1.10.287.40">
    <property type="entry name" value="Serine-tRNA synthetase, tRNA binding domain"/>
    <property type="match status" value="1"/>
</dbReference>
<dbReference type="HAMAP" id="MF_00176">
    <property type="entry name" value="Ser_tRNA_synth_type1"/>
    <property type="match status" value="1"/>
</dbReference>
<dbReference type="InterPro" id="IPR002314">
    <property type="entry name" value="aa-tRNA-synt_IIb"/>
</dbReference>
<dbReference type="InterPro" id="IPR006195">
    <property type="entry name" value="aa-tRNA-synth_II"/>
</dbReference>
<dbReference type="InterPro" id="IPR045864">
    <property type="entry name" value="aa-tRNA-synth_II/BPL/LPL"/>
</dbReference>
<dbReference type="InterPro" id="IPR002317">
    <property type="entry name" value="Ser-tRNA-ligase_type_1"/>
</dbReference>
<dbReference type="InterPro" id="IPR015866">
    <property type="entry name" value="Ser-tRNA-synth_1_N"/>
</dbReference>
<dbReference type="InterPro" id="IPR042103">
    <property type="entry name" value="SerRS_1_N_sf"/>
</dbReference>
<dbReference type="InterPro" id="IPR033729">
    <property type="entry name" value="SerRS_core"/>
</dbReference>
<dbReference type="InterPro" id="IPR010978">
    <property type="entry name" value="tRNA-bd_arm"/>
</dbReference>
<dbReference type="NCBIfam" id="TIGR00414">
    <property type="entry name" value="serS"/>
    <property type="match status" value="1"/>
</dbReference>
<dbReference type="PANTHER" id="PTHR43697:SF1">
    <property type="entry name" value="SERINE--TRNA LIGASE"/>
    <property type="match status" value="1"/>
</dbReference>
<dbReference type="PANTHER" id="PTHR43697">
    <property type="entry name" value="SERYL-TRNA SYNTHETASE"/>
    <property type="match status" value="1"/>
</dbReference>
<dbReference type="Pfam" id="PF02403">
    <property type="entry name" value="Seryl_tRNA_N"/>
    <property type="match status" value="1"/>
</dbReference>
<dbReference type="Pfam" id="PF00587">
    <property type="entry name" value="tRNA-synt_2b"/>
    <property type="match status" value="1"/>
</dbReference>
<dbReference type="PIRSF" id="PIRSF001529">
    <property type="entry name" value="Ser-tRNA-synth_IIa"/>
    <property type="match status" value="1"/>
</dbReference>
<dbReference type="PRINTS" id="PR00981">
    <property type="entry name" value="TRNASYNTHSER"/>
</dbReference>
<dbReference type="SUPFAM" id="SSF55681">
    <property type="entry name" value="Class II aaRS and biotin synthetases"/>
    <property type="match status" value="1"/>
</dbReference>
<dbReference type="SUPFAM" id="SSF46589">
    <property type="entry name" value="tRNA-binding arm"/>
    <property type="match status" value="1"/>
</dbReference>
<dbReference type="PROSITE" id="PS50862">
    <property type="entry name" value="AA_TRNA_LIGASE_II"/>
    <property type="match status" value="1"/>
</dbReference>